<name>SYDND_BURA4</name>
<proteinExistence type="inferred from homology"/>
<keyword id="KW-0030">Aminoacyl-tRNA synthetase</keyword>
<keyword id="KW-0067">ATP-binding</keyword>
<keyword id="KW-0963">Cytoplasm</keyword>
<keyword id="KW-0436">Ligase</keyword>
<keyword id="KW-0547">Nucleotide-binding</keyword>
<keyword id="KW-0648">Protein biosynthesis</keyword>
<reference key="1">
    <citation type="submission" date="2008-04" db="EMBL/GenBank/DDBJ databases">
        <title>Complete sequence of chromosome 1 of Burkholderia ambifaria MC40-6.</title>
        <authorList>
            <person name="Copeland A."/>
            <person name="Lucas S."/>
            <person name="Lapidus A."/>
            <person name="Glavina del Rio T."/>
            <person name="Dalin E."/>
            <person name="Tice H."/>
            <person name="Pitluck S."/>
            <person name="Chain P."/>
            <person name="Malfatti S."/>
            <person name="Shin M."/>
            <person name="Vergez L."/>
            <person name="Lang D."/>
            <person name="Schmutz J."/>
            <person name="Larimer F."/>
            <person name="Land M."/>
            <person name="Hauser L."/>
            <person name="Kyrpides N."/>
            <person name="Lykidis A."/>
            <person name="Ramette A."/>
            <person name="Konstantinidis K."/>
            <person name="Tiedje J."/>
            <person name="Richardson P."/>
        </authorList>
    </citation>
    <scope>NUCLEOTIDE SEQUENCE [LARGE SCALE GENOMIC DNA]</scope>
    <source>
        <strain>MC40-6</strain>
    </source>
</reference>
<comment type="function">
    <text evidence="1">Aspartyl-tRNA synthetase with relaxed tRNA specificity since it is able to aspartylate not only its cognate tRNA(Asp) but also tRNA(Asn). Reaction proceeds in two steps: L-aspartate is first activated by ATP to form Asp-AMP and then transferred to the acceptor end of tRNA(Asp/Asn).</text>
</comment>
<comment type="catalytic activity">
    <reaction evidence="1">
        <text>tRNA(Asx) + L-aspartate + ATP = L-aspartyl-tRNA(Asx) + AMP + diphosphate</text>
        <dbReference type="Rhea" id="RHEA:18349"/>
        <dbReference type="Rhea" id="RHEA-COMP:9710"/>
        <dbReference type="Rhea" id="RHEA-COMP:9711"/>
        <dbReference type="ChEBI" id="CHEBI:29991"/>
        <dbReference type="ChEBI" id="CHEBI:30616"/>
        <dbReference type="ChEBI" id="CHEBI:33019"/>
        <dbReference type="ChEBI" id="CHEBI:78442"/>
        <dbReference type="ChEBI" id="CHEBI:78516"/>
        <dbReference type="ChEBI" id="CHEBI:456215"/>
        <dbReference type="EC" id="6.1.1.23"/>
    </reaction>
</comment>
<comment type="subunit">
    <text evidence="1">Homodimer.</text>
</comment>
<comment type="subcellular location">
    <subcellularLocation>
        <location evidence="1">Cytoplasm</location>
    </subcellularLocation>
</comment>
<comment type="similarity">
    <text evidence="1">Belongs to the class-II aminoacyl-tRNA synthetase family. Type 1 subfamily.</text>
</comment>
<accession>B1YWF2</accession>
<evidence type="ECO:0000255" key="1">
    <source>
        <dbReference type="HAMAP-Rule" id="MF_00044"/>
    </source>
</evidence>
<feature type="chain" id="PRO_1000090967" description="Aspartate--tRNA(Asp/Asn) ligase">
    <location>
        <begin position="1"/>
        <end position="600"/>
    </location>
</feature>
<feature type="region of interest" description="Aspartate" evidence="1">
    <location>
        <begin position="198"/>
        <end position="201"/>
    </location>
</feature>
<feature type="binding site" evidence="1">
    <location>
        <position position="174"/>
    </location>
    <ligand>
        <name>L-aspartate</name>
        <dbReference type="ChEBI" id="CHEBI:29991"/>
    </ligand>
</feature>
<feature type="binding site" evidence="1">
    <location>
        <begin position="220"/>
        <end position="222"/>
    </location>
    <ligand>
        <name>ATP</name>
        <dbReference type="ChEBI" id="CHEBI:30616"/>
    </ligand>
</feature>
<feature type="binding site" evidence="1">
    <location>
        <position position="220"/>
    </location>
    <ligand>
        <name>L-aspartate</name>
        <dbReference type="ChEBI" id="CHEBI:29991"/>
    </ligand>
</feature>
<feature type="binding site" evidence="1">
    <location>
        <position position="229"/>
    </location>
    <ligand>
        <name>ATP</name>
        <dbReference type="ChEBI" id="CHEBI:30616"/>
    </ligand>
</feature>
<feature type="binding site" evidence="1">
    <location>
        <position position="457"/>
    </location>
    <ligand>
        <name>L-aspartate</name>
        <dbReference type="ChEBI" id="CHEBI:29991"/>
    </ligand>
</feature>
<feature type="binding site" evidence="1">
    <location>
        <position position="491"/>
    </location>
    <ligand>
        <name>ATP</name>
        <dbReference type="ChEBI" id="CHEBI:30616"/>
    </ligand>
</feature>
<feature type="binding site" evidence="1">
    <location>
        <position position="498"/>
    </location>
    <ligand>
        <name>L-aspartate</name>
        <dbReference type="ChEBI" id="CHEBI:29991"/>
    </ligand>
</feature>
<feature type="binding site" evidence="1">
    <location>
        <begin position="543"/>
        <end position="546"/>
    </location>
    <ligand>
        <name>ATP</name>
        <dbReference type="ChEBI" id="CHEBI:30616"/>
    </ligand>
</feature>
<feature type="site" description="Important for tRNA non-discrimination" evidence="1">
    <location>
        <position position="32"/>
    </location>
</feature>
<feature type="site" description="Important for tRNA non-discrimination" evidence="1">
    <location>
        <position position="83"/>
    </location>
</feature>
<organism>
    <name type="scientific">Burkholderia ambifaria (strain MC40-6)</name>
    <dbReference type="NCBI Taxonomy" id="398577"/>
    <lineage>
        <taxon>Bacteria</taxon>
        <taxon>Pseudomonadati</taxon>
        <taxon>Pseudomonadota</taxon>
        <taxon>Betaproteobacteria</taxon>
        <taxon>Burkholderiales</taxon>
        <taxon>Burkholderiaceae</taxon>
        <taxon>Burkholderia</taxon>
        <taxon>Burkholderia cepacia complex</taxon>
    </lineage>
</organism>
<dbReference type="EC" id="6.1.1.23" evidence="1"/>
<dbReference type="EMBL" id="CP001025">
    <property type="protein sequence ID" value="ACB65120.1"/>
    <property type="molecule type" value="Genomic_DNA"/>
</dbReference>
<dbReference type="RefSeq" id="WP_006477843.1">
    <property type="nucleotide sequence ID" value="NC_010551.1"/>
</dbReference>
<dbReference type="SMR" id="B1YWF2"/>
<dbReference type="GeneID" id="93194203"/>
<dbReference type="KEGG" id="bac:BamMC406_2643"/>
<dbReference type="HOGENOM" id="CLU_014330_3_2_4"/>
<dbReference type="OrthoDB" id="9802326at2"/>
<dbReference type="Proteomes" id="UP000001680">
    <property type="component" value="Chromosome 1"/>
</dbReference>
<dbReference type="GO" id="GO:0005737">
    <property type="term" value="C:cytoplasm"/>
    <property type="evidence" value="ECO:0007669"/>
    <property type="project" value="UniProtKB-SubCell"/>
</dbReference>
<dbReference type="GO" id="GO:0004815">
    <property type="term" value="F:aspartate-tRNA ligase activity"/>
    <property type="evidence" value="ECO:0007669"/>
    <property type="project" value="UniProtKB-UniRule"/>
</dbReference>
<dbReference type="GO" id="GO:0050560">
    <property type="term" value="F:aspartate-tRNA(Asn) ligase activity"/>
    <property type="evidence" value="ECO:0007669"/>
    <property type="project" value="UniProtKB-EC"/>
</dbReference>
<dbReference type="GO" id="GO:0005524">
    <property type="term" value="F:ATP binding"/>
    <property type="evidence" value="ECO:0007669"/>
    <property type="project" value="UniProtKB-UniRule"/>
</dbReference>
<dbReference type="GO" id="GO:0003676">
    <property type="term" value="F:nucleic acid binding"/>
    <property type="evidence" value="ECO:0007669"/>
    <property type="project" value="InterPro"/>
</dbReference>
<dbReference type="GO" id="GO:0006422">
    <property type="term" value="P:aspartyl-tRNA aminoacylation"/>
    <property type="evidence" value="ECO:0007669"/>
    <property type="project" value="UniProtKB-UniRule"/>
</dbReference>
<dbReference type="CDD" id="cd00777">
    <property type="entry name" value="AspRS_core"/>
    <property type="match status" value="1"/>
</dbReference>
<dbReference type="CDD" id="cd04317">
    <property type="entry name" value="EcAspRS_like_N"/>
    <property type="match status" value="1"/>
</dbReference>
<dbReference type="Gene3D" id="3.30.930.10">
    <property type="entry name" value="Bira Bifunctional Protein, Domain 2"/>
    <property type="match status" value="1"/>
</dbReference>
<dbReference type="Gene3D" id="3.30.1360.30">
    <property type="entry name" value="GAD-like domain"/>
    <property type="match status" value="1"/>
</dbReference>
<dbReference type="Gene3D" id="2.40.50.140">
    <property type="entry name" value="Nucleic acid-binding proteins"/>
    <property type="match status" value="1"/>
</dbReference>
<dbReference type="HAMAP" id="MF_00044">
    <property type="entry name" value="Asp_tRNA_synth_type1"/>
    <property type="match status" value="1"/>
</dbReference>
<dbReference type="InterPro" id="IPR004364">
    <property type="entry name" value="Aa-tRNA-synt_II"/>
</dbReference>
<dbReference type="InterPro" id="IPR006195">
    <property type="entry name" value="aa-tRNA-synth_II"/>
</dbReference>
<dbReference type="InterPro" id="IPR045864">
    <property type="entry name" value="aa-tRNA-synth_II/BPL/LPL"/>
</dbReference>
<dbReference type="InterPro" id="IPR004524">
    <property type="entry name" value="Asp-tRNA-ligase_1"/>
</dbReference>
<dbReference type="InterPro" id="IPR047089">
    <property type="entry name" value="Asp-tRNA-ligase_1_N"/>
</dbReference>
<dbReference type="InterPro" id="IPR002312">
    <property type="entry name" value="Asp/Asn-tRNA-synth_IIb"/>
</dbReference>
<dbReference type="InterPro" id="IPR047090">
    <property type="entry name" value="AspRS_core"/>
</dbReference>
<dbReference type="InterPro" id="IPR004115">
    <property type="entry name" value="GAD-like_sf"/>
</dbReference>
<dbReference type="InterPro" id="IPR029351">
    <property type="entry name" value="GAD_dom"/>
</dbReference>
<dbReference type="InterPro" id="IPR012340">
    <property type="entry name" value="NA-bd_OB-fold"/>
</dbReference>
<dbReference type="InterPro" id="IPR004365">
    <property type="entry name" value="NA-bd_OB_tRNA"/>
</dbReference>
<dbReference type="NCBIfam" id="TIGR00459">
    <property type="entry name" value="aspS_bact"/>
    <property type="match status" value="1"/>
</dbReference>
<dbReference type="NCBIfam" id="NF001750">
    <property type="entry name" value="PRK00476.1"/>
    <property type="match status" value="1"/>
</dbReference>
<dbReference type="PANTHER" id="PTHR22594:SF5">
    <property type="entry name" value="ASPARTATE--TRNA LIGASE, MITOCHONDRIAL"/>
    <property type="match status" value="1"/>
</dbReference>
<dbReference type="PANTHER" id="PTHR22594">
    <property type="entry name" value="ASPARTYL/LYSYL-TRNA SYNTHETASE"/>
    <property type="match status" value="1"/>
</dbReference>
<dbReference type="Pfam" id="PF02938">
    <property type="entry name" value="GAD"/>
    <property type="match status" value="1"/>
</dbReference>
<dbReference type="Pfam" id="PF00152">
    <property type="entry name" value="tRNA-synt_2"/>
    <property type="match status" value="1"/>
</dbReference>
<dbReference type="Pfam" id="PF01336">
    <property type="entry name" value="tRNA_anti-codon"/>
    <property type="match status" value="1"/>
</dbReference>
<dbReference type="PRINTS" id="PR01042">
    <property type="entry name" value="TRNASYNTHASP"/>
</dbReference>
<dbReference type="SUPFAM" id="SSF55681">
    <property type="entry name" value="Class II aaRS and biotin synthetases"/>
    <property type="match status" value="1"/>
</dbReference>
<dbReference type="SUPFAM" id="SSF55261">
    <property type="entry name" value="GAD domain-like"/>
    <property type="match status" value="1"/>
</dbReference>
<dbReference type="SUPFAM" id="SSF50249">
    <property type="entry name" value="Nucleic acid-binding proteins"/>
    <property type="match status" value="1"/>
</dbReference>
<dbReference type="PROSITE" id="PS50862">
    <property type="entry name" value="AA_TRNA_LIGASE_II"/>
    <property type="match status" value="1"/>
</dbReference>
<gene>
    <name evidence="1" type="primary">aspS</name>
    <name type="ordered locus">BamMC406_2643</name>
</gene>
<protein>
    <recommendedName>
        <fullName evidence="1">Aspartate--tRNA(Asp/Asn) ligase</fullName>
        <ecNumber evidence="1">6.1.1.23</ecNumber>
    </recommendedName>
    <alternativeName>
        <fullName evidence="1">Aspartyl-tRNA synthetase</fullName>
        <shortName evidence="1">AspRS</shortName>
    </alternativeName>
    <alternativeName>
        <fullName evidence="1">Non-discriminating aspartyl-tRNA synthetase</fullName>
        <shortName evidence="1">ND-AspRS</shortName>
    </alternativeName>
</protein>
<sequence length="600" mass="67743">MSMRTEYCGLVTEHLLGQTVSLCGWVQRRRDHGGVIFIDLRDREGLVQVVCDPDRAEMFATAEGVRNEFCVQIKGLVRNRPEGTVNAGLKSGKIEVLCHELNVLNASVTPPFQLDDDNLSETTRLTHRVLDLRRPQMQHNLRLRYRVAIEARKYLDEQGFIDIETPMLTKSTPEGARDYLVPSRVNAGQFFALPQSPQLFKQLLMVANFDRYYQITKCFRDEDLRADRQPEFTQIDCETSFLGEQEIRDLFEDMIRHIFKTTIDVELDAKFPVMPYSEAMARFGSDKPDLRVQLEFTELTDAMKDVDFKVFSTPANAKDGRVAALRVPKGGELSRGDIDGYTEFVRIYGAKGLAWIKVNEKAKGRDGLQSPIVKNLHDASIAAILERTGAEDGDIIFFAADRAKVVNDSLGALRLKIGHSEFGKANGLVQAGWKPLWVVDFPMFEYDDEDARYVAAHHPFTSPKDEHLEYLETDPGRCLAKAYDMVLNGWEIGGGSVRIHREEVQSKVFRALKIGAEEAQLKFGFLLDALQYGAPPHGGIAFGLDRIVTMMAGADSIRDVIAFPKTQRAQDLLTQAPSPVDERQLRELHIRLRQPEQPKA</sequence>